<accession>A2AWH2</accession>
<accession>A1L1T2</accession>
<organism>
    <name type="scientific">Danio rerio</name>
    <name type="common">Zebrafish</name>
    <name type="synonym">Brachydanio rerio</name>
    <dbReference type="NCBI Taxonomy" id="7955"/>
    <lineage>
        <taxon>Eukaryota</taxon>
        <taxon>Metazoa</taxon>
        <taxon>Chordata</taxon>
        <taxon>Craniata</taxon>
        <taxon>Vertebrata</taxon>
        <taxon>Euteleostomi</taxon>
        <taxon>Actinopterygii</taxon>
        <taxon>Neopterygii</taxon>
        <taxon>Teleostei</taxon>
        <taxon>Ostariophysi</taxon>
        <taxon>Cypriniformes</taxon>
        <taxon>Danionidae</taxon>
        <taxon>Danioninae</taxon>
        <taxon>Danio</taxon>
    </lineage>
</organism>
<proteinExistence type="evidence at transcript level"/>
<comment type="function">
    <text evidence="1">Probable component of the NALCN channel complex, a channel that regulates the resting membrane potential and controls neuronal excitability.</text>
</comment>
<comment type="subcellular location">
    <subcellularLocation>
        <location evidence="3">Membrane</location>
        <topology evidence="3">Multi-pass membrane protein</topology>
    </subcellularLocation>
</comment>
<comment type="similarity">
    <text evidence="3">Belongs to the NALF family.</text>
</comment>
<gene>
    <name type="primary">nalf2</name>
    <name evidence="3" type="synonym">fam155b</name>
    <name type="ORF">si:dkey-48f17.1</name>
    <name type="ORF">zgc:158322</name>
</gene>
<dbReference type="EMBL" id="AL954373">
    <property type="protein sequence ID" value="CAM16112.1"/>
    <property type="molecule type" value="Genomic_DNA"/>
</dbReference>
<dbReference type="EMBL" id="BC129201">
    <property type="protein sequence ID" value="AAI29202.1"/>
    <property type="molecule type" value="mRNA"/>
</dbReference>
<dbReference type="RefSeq" id="NP_001074112.2">
    <property type="nucleotide sequence ID" value="NM_001080643.2"/>
</dbReference>
<dbReference type="SMR" id="A2AWH2"/>
<dbReference type="FunCoup" id="A2AWH2">
    <property type="interactions" value="209"/>
</dbReference>
<dbReference type="STRING" id="7955.ENSDARP00000078899"/>
<dbReference type="GlyCosmos" id="A2AWH2">
    <property type="glycosylation" value="4 sites, No reported glycans"/>
</dbReference>
<dbReference type="PaxDb" id="7955-ENSDARP00000078899"/>
<dbReference type="Ensembl" id="ENSDART00000084464">
    <property type="protein sequence ID" value="ENSDARP00000078899"/>
    <property type="gene ID" value="ENSDARG00000060152"/>
</dbReference>
<dbReference type="GeneID" id="791161"/>
<dbReference type="KEGG" id="dre:791161"/>
<dbReference type="AGR" id="ZFIN:ZDB-GENE-060526-303"/>
<dbReference type="CTD" id="27112"/>
<dbReference type="ZFIN" id="ZDB-GENE-060526-303">
    <property type="gene designation" value="nalf2"/>
</dbReference>
<dbReference type="eggNOG" id="ENOG502QQKW">
    <property type="taxonomic scope" value="Eukaryota"/>
</dbReference>
<dbReference type="HOGENOM" id="CLU_058453_0_0_1"/>
<dbReference type="InParanoid" id="A2AWH2"/>
<dbReference type="OMA" id="QWVSCEA"/>
<dbReference type="OrthoDB" id="10047996at2759"/>
<dbReference type="PhylomeDB" id="A2AWH2"/>
<dbReference type="TreeFam" id="TF331752"/>
<dbReference type="PRO" id="PR:A2AWH2"/>
<dbReference type="Proteomes" id="UP000000437">
    <property type="component" value="Alternate scaffold 5"/>
</dbReference>
<dbReference type="Proteomes" id="UP000000437">
    <property type="component" value="Chromosome 5"/>
</dbReference>
<dbReference type="Bgee" id="ENSDARG00000060152">
    <property type="expression patterns" value="Expressed in brain and 8 other cell types or tissues"/>
</dbReference>
<dbReference type="GO" id="GO:0005886">
    <property type="term" value="C:plasma membrane"/>
    <property type="evidence" value="ECO:0000318"/>
    <property type="project" value="GO_Central"/>
</dbReference>
<dbReference type="GO" id="GO:0098703">
    <property type="term" value="P:calcium ion import across plasma membrane"/>
    <property type="evidence" value="ECO:0000318"/>
    <property type="project" value="GO_Central"/>
</dbReference>
<dbReference type="InterPro" id="IPR055288">
    <property type="entry name" value="NALCN_aux_factor_1/2"/>
</dbReference>
<dbReference type="PANTHER" id="PTHR15819:SF8">
    <property type="entry name" value="NALCN CHANNEL AUXILIARY FACTOR 2"/>
    <property type="match status" value="1"/>
</dbReference>
<dbReference type="PANTHER" id="PTHR15819">
    <property type="entry name" value="TRANSMEMBRANE PROTEIN FAM155"/>
    <property type="match status" value="1"/>
</dbReference>
<feature type="chain" id="PRO_0000339375" description="NALCN channel auxiliary factor 2">
    <location>
        <begin position="1"/>
        <end position="401"/>
    </location>
</feature>
<feature type="transmembrane region" description="Helical" evidence="2">
    <location>
        <begin position="42"/>
        <end position="62"/>
    </location>
</feature>
<feature type="transmembrane region" description="Helical" evidence="2">
    <location>
        <begin position="362"/>
        <end position="382"/>
    </location>
</feature>
<feature type="glycosylation site" description="N-linked (GlcNAc...) asparagine" evidence="2">
    <location>
        <position position="77"/>
    </location>
</feature>
<feature type="glycosylation site" description="N-linked (GlcNAc...) asparagine" evidence="2">
    <location>
        <position position="97"/>
    </location>
</feature>
<feature type="glycosylation site" description="N-linked (GlcNAc...) asparagine" evidence="2">
    <location>
        <position position="153"/>
    </location>
</feature>
<feature type="glycosylation site" description="N-linked (GlcNAc...) asparagine" evidence="2">
    <location>
        <position position="178"/>
    </location>
</feature>
<feature type="sequence conflict" description="In Ref. 2; AAI29202." evidence="3" ref="2">
    <original>N</original>
    <variation>S</variation>
    <location>
        <position position="76"/>
    </location>
</feature>
<protein>
    <recommendedName>
        <fullName>NALCN channel auxiliary factor 2</fullName>
    </recommendedName>
    <alternativeName>
        <fullName>Transmembrane protein FAM155B</fullName>
    </alternativeName>
</protein>
<evidence type="ECO:0000250" key="1">
    <source>
        <dbReference type="UniProtKB" id="O75949"/>
    </source>
</evidence>
<evidence type="ECO:0000255" key="2"/>
<evidence type="ECO:0000305" key="3"/>
<reference key="1">
    <citation type="journal article" date="2013" name="Nature">
        <title>The zebrafish reference genome sequence and its relationship to the human genome.</title>
        <authorList>
            <person name="Howe K."/>
            <person name="Clark M.D."/>
            <person name="Torroja C.F."/>
            <person name="Torrance J."/>
            <person name="Berthelot C."/>
            <person name="Muffato M."/>
            <person name="Collins J.E."/>
            <person name="Humphray S."/>
            <person name="McLaren K."/>
            <person name="Matthews L."/>
            <person name="McLaren S."/>
            <person name="Sealy I."/>
            <person name="Caccamo M."/>
            <person name="Churcher C."/>
            <person name="Scott C."/>
            <person name="Barrett J.C."/>
            <person name="Koch R."/>
            <person name="Rauch G.J."/>
            <person name="White S."/>
            <person name="Chow W."/>
            <person name="Kilian B."/>
            <person name="Quintais L.T."/>
            <person name="Guerra-Assuncao J.A."/>
            <person name="Zhou Y."/>
            <person name="Gu Y."/>
            <person name="Yen J."/>
            <person name="Vogel J.H."/>
            <person name="Eyre T."/>
            <person name="Redmond S."/>
            <person name="Banerjee R."/>
            <person name="Chi J."/>
            <person name="Fu B."/>
            <person name="Langley E."/>
            <person name="Maguire S.F."/>
            <person name="Laird G.K."/>
            <person name="Lloyd D."/>
            <person name="Kenyon E."/>
            <person name="Donaldson S."/>
            <person name="Sehra H."/>
            <person name="Almeida-King J."/>
            <person name="Loveland J."/>
            <person name="Trevanion S."/>
            <person name="Jones M."/>
            <person name="Quail M."/>
            <person name="Willey D."/>
            <person name="Hunt A."/>
            <person name="Burton J."/>
            <person name="Sims S."/>
            <person name="McLay K."/>
            <person name="Plumb B."/>
            <person name="Davis J."/>
            <person name="Clee C."/>
            <person name="Oliver K."/>
            <person name="Clark R."/>
            <person name="Riddle C."/>
            <person name="Elliot D."/>
            <person name="Threadgold G."/>
            <person name="Harden G."/>
            <person name="Ware D."/>
            <person name="Begum S."/>
            <person name="Mortimore B."/>
            <person name="Kerry G."/>
            <person name="Heath P."/>
            <person name="Phillimore B."/>
            <person name="Tracey A."/>
            <person name="Corby N."/>
            <person name="Dunn M."/>
            <person name="Johnson C."/>
            <person name="Wood J."/>
            <person name="Clark S."/>
            <person name="Pelan S."/>
            <person name="Griffiths G."/>
            <person name="Smith M."/>
            <person name="Glithero R."/>
            <person name="Howden P."/>
            <person name="Barker N."/>
            <person name="Lloyd C."/>
            <person name="Stevens C."/>
            <person name="Harley J."/>
            <person name="Holt K."/>
            <person name="Panagiotidis G."/>
            <person name="Lovell J."/>
            <person name="Beasley H."/>
            <person name="Henderson C."/>
            <person name="Gordon D."/>
            <person name="Auger K."/>
            <person name="Wright D."/>
            <person name="Collins J."/>
            <person name="Raisen C."/>
            <person name="Dyer L."/>
            <person name="Leung K."/>
            <person name="Robertson L."/>
            <person name="Ambridge K."/>
            <person name="Leongamornlert D."/>
            <person name="McGuire S."/>
            <person name="Gilderthorp R."/>
            <person name="Griffiths C."/>
            <person name="Manthravadi D."/>
            <person name="Nichol S."/>
            <person name="Barker G."/>
            <person name="Whitehead S."/>
            <person name="Kay M."/>
            <person name="Brown J."/>
            <person name="Murnane C."/>
            <person name="Gray E."/>
            <person name="Humphries M."/>
            <person name="Sycamore N."/>
            <person name="Barker D."/>
            <person name="Saunders D."/>
            <person name="Wallis J."/>
            <person name="Babbage A."/>
            <person name="Hammond S."/>
            <person name="Mashreghi-Mohammadi M."/>
            <person name="Barr L."/>
            <person name="Martin S."/>
            <person name="Wray P."/>
            <person name="Ellington A."/>
            <person name="Matthews N."/>
            <person name="Ellwood M."/>
            <person name="Woodmansey R."/>
            <person name="Clark G."/>
            <person name="Cooper J."/>
            <person name="Tromans A."/>
            <person name="Grafham D."/>
            <person name="Skuce C."/>
            <person name="Pandian R."/>
            <person name="Andrews R."/>
            <person name="Harrison E."/>
            <person name="Kimberley A."/>
            <person name="Garnett J."/>
            <person name="Fosker N."/>
            <person name="Hall R."/>
            <person name="Garner P."/>
            <person name="Kelly D."/>
            <person name="Bird C."/>
            <person name="Palmer S."/>
            <person name="Gehring I."/>
            <person name="Berger A."/>
            <person name="Dooley C.M."/>
            <person name="Ersan-Urun Z."/>
            <person name="Eser C."/>
            <person name="Geiger H."/>
            <person name="Geisler M."/>
            <person name="Karotki L."/>
            <person name="Kirn A."/>
            <person name="Konantz J."/>
            <person name="Konantz M."/>
            <person name="Oberlander M."/>
            <person name="Rudolph-Geiger S."/>
            <person name="Teucke M."/>
            <person name="Lanz C."/>
            <person name="Raddatz G."/>
            <person name="Osoegawa K."/>
            <person name="Zhu B."/>
            <person name="Rapp A."/>
            <person name="Widaa S."/>
            <person name="Langford C."/>
            <person name="Yang F."/>
            <person name="Schuster S.C."/>
            <person name="Carter N.P."/>
            <person name="Harrow J."/>
            <person name="Ning Z."/>
            <person name="Herrero J."/>
            <person name="Searle S.M."/>
            <person name="Enright A."/>
            <person name="Geisler R."/>
            <person name="Plasterk R.H."/>
            <person name="Lee C."/>
            <person name="Westerfield M."/>
            <person name="de Jong P.J."/>
            <person name="Zon L.I."/>
            <person name="Postlethwait J.H."/>
            <person name="Nusslein-Volhard C."/>
            <person name="Hubbard T.J."/>
            <person name="Roest Crollius H."/>
            <person name="Rogers J."/>
            <person name="Stemple D.L."/>
        </authorList>
    </citation>
    <scope>NUCLEOTIDE SEQUENCE [LARGE SCALE GENOMIC DNA]</scope>
    <source>
        <strain>Tuebingen</strain>
    </source>
</reference>
<reference key="2">
    <citation type="submission" date="2006-12" db="EMBL/GenBank/DDBJ databases">
        <authorList>
            <consortium name="NIH - Zebrafish Gene Collection (ZGC) project"/>
        </authorList>
    </citation>
    <scope>NUCLEOTIDE SEQUENCE [LARGE SCALE MRNA]</scope>
    <source>
        <tissue>Embryo</tissue>
    </source>
</reference>
<keyword id="KW-0325">Glycoprotein</keyword>
<keyword id="KW-0472">Membrane</keyword>
<keyword id="KW-1185">Reference proteome</keyword>
<keyword id="KW-0812">Transmembrane</keyword>
<keyword id="KW-1133">Transmembrane helix</keyword>
<sequence>MITGAWRCGRKLDAELEICRVTEPIDKPCAESEKVQRWRMSLASLLFFTALLSDHLWLCAGGKLRSRDRTHRRTWNNASHDAQTGLRDEDCGVLLSNLTENGPDCVEADARRRAPLESACSTLYRQKSGSVSSSYSVTVPTVSPHAFLEYFRNFSLSFCDALTIADLLESMTSPDGLNCSLTHIIRDLFSGGPEDGDACSACVHAYTRLDQHAQEKYEEFDALTRKYMADDYSVRAQTHLCQVVYKAWLCAEYFPVPQRQCVRWLPCRHYCGEVTATCPFILPDNDRLLYAGSPSFLCAGFQEEYLSSQGPDCCDVRWSGCDSAVGAACALTHLPGSFSFHRRLSSGAMSCTNRLHGSKLKLCVLVLFLLHTFISITTLQHCSTGSLEAIVPLEEVPMREE</sequence>
<name>NALF2_DANRE</name>